<organism>
    <name type="scientific">Anaeromyxobacter dehalogenans (strain 2CP-C)</name>
    <dbReference type="NCBI Taxonomy" id="290397"/>
    <lineage>
        <taxon>Bacteria</taxon>
        <taxon>Pseudomonadati</taxon>
        <taxon>Myxococcota</taxon>
        <taxon>Myxococcia</taxon>
        <taxon>Myxococcales</taxon>
        <taxon>Cystobacterineae</taxon>
        <taxon>Anaeromyxobacteraceae</taxon>
        <taxon>Anaeromyxobacter</taxon>
    </lineage>
</organism>
<feature type="chain" id="PRO_0000380895" description="8-amino-7-oxononanoate synthase">
    <location>
        <begin position="1"/>
        <end position="397"/>
    </location>
</feature>
<feature type="binding site" evidence="1">
    <location>
        <position position="23"/>
    </location>
    <ligand>
        <name>substrate</name>
    </ligand>
</feature>
<feature type="binding site" evidence="1">
    <location>
        <begin position="110"/>
        <end position="111"/>
    </location>
    <ligand>
        <name>pyridoxal 5'-phosphate</name>
        <dbReference type="ChEBI" id="CHEBI:597326"/>
    </ligand>
</feature>
<feature type="binding site" evidence="1">
    <location>
        <position position="135"/>
    </location>
    <ligand>
        <name>substrate</name>
    </ligand>
</feature>
<feature type="binding site" evidence="1">
    <location>
        <position position="181"/>
    </location>
    <ligand>
        <name>pyridoxal 5'-phosphate</name>
        <dbReference type="ChEBI" id="CHEBI:597326"/>
    </ligand>
</feature>
<feature type="binding site" evidence="1">
    <location>
        <position position="209"/>
    </location>
    <ligand>
        <name>pyridoxal 5'-phosphate</name>
        <dbReference type="ChEBI" id="CHEBI:597326"/>
    </ligand>
</feature>
<feature type="binding site" evidence="1">
    <location>
        <position position="237"/>
    </location>
    <ligand>
        <name>pyridoxal 5'-phosphate</name>
        <dbReference type="ChEBI" id="CHEBI:597326"/>
    </ligand>
</feature>
<feature type="binding site" evidence="1">
    <location>
        <position position="354"/>
    </location>
    <ligand>
        <name>substrate</name>
    </ligand>
</feature>
<feature type="modified residue" description="N6-(pyridoxal phosphate)lysine" evidence="1">
    <location>
        <position position="240"/>
    </location>
</feature>
<reference key="1">
    <citation type="submission" date="2006-01" db="EMBL/GenBank/DDBJ databases">
        <title>Complete sequence of Anaeromyxobacter dehalogenans 2CP-C.</title>
        <authorList>
            <person name="Copeland A."/>
            <person name="Lucas S."/>
            <person name="Lapidus A."/>
            <person name="Barry K."/>
            <person name="Detter J.C."/>
            <person name="Glavina T."/>
            <person name="Hammon N."/>
            <person name="Israni S."/>
            <person name="Pitluck S."/>
            <person name="Brettin T."/>
            <person name="Bruce D."/>
            <person name="Han C."/>
            <person name="Tapia R."/>
            <person name="Gilna P."/>
            <person name="Kiss H."/>
            <person name="Schmutz J."/>
            <person name="Larimer F."/>
            <person name="Land M."/>
            <person name="Kyrpides N."/>
            <person name="Anderson I."/>
            <person name="Sanford R.A."/>
            <person name="Ritalahti K.M."/>
            <person name="Thomas H.S."/>
            <person name="Kirby J.R."/>
            <person name="Zhulin I.B."/>
            <person name="Loeffler F.E."/>
            <person name="Richardson P."/>
        </authorList>
    </citation>
    <scope>NUCLEOTIDE SEQUENCE [LARGE SCALE GENOMIC DNA]</scope>
    <source>
        <strain>2CP-C</strain>
    </source>
</reference>
<gene>
    <name evidence="1" type="primary">bioF</name>
    <name type="ordered locus">Adeh_3452</name>
</gene>
<keyword id="KW-0093">Biotin biosynthesis</keyword>
<keyword id="KW-0663">Pyridoxal phosphate</keyword>
<keyword id="KW-1185">Reference proteome</keyword>
<keyword id="KW-0808">Transferase</keyword>
<evidence type="ECO:0000255" key="1">
    <source>
        <dbReference type="HAMAP-Rule" id="MF_01693"/>
    </source>
</evidence>
<accession>Q2IF62</accession>
<proteinExistence type="inferred from homology"/>
<sequence>MARGALDWIGAELVALDAKGLRRSLEPIGPAQGPVVRVGGRALVNLCSNDYLGLAADPRVRAAAADAAARFGAGSGAARLVAGDLPPHGALEARLAAWKGREAALLFGSGYHANAGVPGALVGRDDAVFSDVLNHASIVDGCLLSRAELVRYRHCDVEELAGLLARTRARRKLVVTDAIFSMDGDAAPLRELADLCDRHGAMLYVDEAHAAGVLGPGGAGLAEALGVQDRVDVHMGTLGKALGAFGAYVAGERRLVELLLSRARPFVFSTALPPPACAAALAALEVVATEPSRRTRLFALCARMQAGLARLGFDVARVASPIFPVVLGTEARALAAAAALRERGWFVRAIRPPTVPRGTSRLRVALSAAHDEAQVDGFLAALAEVLPGLPPEPRPPA</sequence>
<name>BIOF_ANADE</name>
<protein>
    <recommendedName>
        <fullName evidence="1">8-amino-7-oxononanoate synthase</fullName>
        <shortName evidence="1">AONS</shortName>
        <ecNumber evidence="1">2.3.1.47</ecNumber>
    </recommendedName>
    <alternativeName>
        <fullName evidence="1">7-keto-8-amino-pelargonic acid synthase</fullName>
        <shortName evidence="1">7-KAP synthase</shortName>
        <shortName evidence="1">KAPA synthase</shortName>
    </alternativeName>
    <alternativeName>
        <fullName evidence="1">8-amino-7-ketopelargonate synthase</fullName>
    </alternativeName>
</protein>
<comment type="function">
    <text evidence="1">Catalyzes the decarboxylative condensation of pimeloyl-[acyl-carrier protein] and L-alanine to produce 8-amino-7-oxononanoate (AON), [acyl-carrier protein], and carbon dioxide.</text>
</comment>
<comment type="catalytic activity">
    <reaction evidence="1">
        <text>6-carboxyhexanoyl-[ACP] + L-alanine + H(+) = (8S)-8-amino-7-oxononanoate + holo-[ACP] + CO2</text>
        <dbReference type="Rhea" id="RHEA:42288"/>
        <dbReference type="Rhea" id="RHEA-COMP:9685"/>
        <dbReference type="Rhea" id="RHEA-COMP:9955"/>
        <dbReference type="ChEBI" id="CHEBI:15378"/>
        <dbReference type="ChEBI" id="CHEBI:16526"/>
        <dbReference type="ChEBI" id="CHEBI:57972"/>
        <dbReference type="ChEBI" id="CHEBI:64479"/>
        <dbReference type="ChEBI" id="CHEBI:78846"/>
        <dbReference type="ChEBI" id="CHEBI:149468"/>
        <dbReference type="EC" id="2.3.1.47"/>
    </reaction>
</comment>
<comment type="cofactor">
    <cofactor evidence="1">
        <name>pyridoxal 5'-phosphate</name>
        <dbReference type="ChEBI" id="CHEBI:597326"/>
    </cofactor>
</comment>
<comment type="pathway">
    <text evidence="1">Cofactor biosynthesis; biotin biosynthesis.</text>
</comment>
<comment type="subunit">
    <text evidence="1">Homodimer.</text>
</comment>
<comment type="similarity">
    <text evidence="1">Belongs to the class-II pyridoxal-phosphate-dependent aminotransferase family. BioF subfamily.</text>
</comment>
<dbReference type="EC" id="2.3.1.47" evidence="1"/>
<dbReference type="EMBL" id="CP000251">
    <property type="protein sequence ID" value="ABC83219.1"/>
    <property type="molecule type" value="Genomic_DNA"/>
</dbReference>
<dbReference type="RefSeq" id="WP_011422501.1">
    <property type="nucleotide sequence ID" value="NC_007760.1"/>
</dbReference>
<dbReference type="SMR" id="Q2IF62"/>
<dbReference type="STRING" id="290397.Adeh_3452"/>
<dbReference type="KEGG" id="ade:Adeh_3452"/>
<dbReference type="eggNOG" id="COG0156">
    <property type="taxonomic scope" value="Bacteria"/>
</dbReference>
<dbReference type="HOGENOM" id="CLU_015846_11_0_7"/>
<dbReference type="OrthoDB" id="9807157at2"/>
<dbReference type="UniPathway" id="UPA00078"/>
<dbReference type="Proteomes" id="UP000001935">
    <property type="component" value="Chromosome"/>
</dbReference>
<dbReference type="GO" id="GO:0008710">
    <property type="term" value="F:8-amino-7-oxononanoate synthase activity"/>
    <property type="evidence" value="ECO:0007669"/>
    <property type="project" value="UniProtKB-EC"/>
</dbReference>
<dbReference type="GO" id="GO:0030170">
    <property type="term" value="F:pyridoxal phosphate binding"/>
    <property type="evidence" value="ECO:0007669"/>
    <property type="project" value="InterPro"/>
</dbReference>
<dbReference type="GO" id="GO:0009102">
    <property type="term" value="P:biotin biosynthetic process"/>
    <property type="evidence" value="ECO:0007669"/>
    <property type="project" value="UniProtKB-UniPathway"/>
</dbReference>
<dbReference type="CDD" id="cd06454">
    <property type="entry name" value="KBL_like"/>
    <property type="match status" value="1"/>
</dbReference>
<dbReference type="Gene3D" id="3.90.1150.10">
    <property type="entry name" value="Aspartate Aminotransferase, domain 1"/>
    <property type="match status" value="1"/>
</dbReference>
<dbReference type="Gene3D" id="3.40.640.10">
    <property type="entry name" value="Type I PLP-dependent aspartate aminotransferase-like (Major domain)"/>
    <property type="match status" value="1"/>
</dbReference>
<dbReference type="HAMAP" id="MF_01693">
    <property type="entry name" value="BioF_aminotrans_2"/>
    <property type="match status" value="1"/>
</dbReference>
<dbReference type="InterPro" id="IPR001917">
    <property type="entry name" value="Aminotrans_II_pyridoxalP_BS"/>
</dbReference>
<dbReference type="InterPro" id="IPR004839">
    <property type="entry name" value="Aminotransferase_I/II_large"/>
</dbReference>
<dbReference type="InterPro" id="IPR050087">
    <property type="entry name" value="AON_synthase_class-II"/>
</dbReference>
<dbReference type="InterPro" id="IPR004723">
    <property type="entry name" value="AONS_Archaea/Proteobacteria"/>
</dbReference>
<dbReference type="InterPro" id="IPR022834">
    <property type="entry name" value="AONS_Proteobacteria"/>
</dbReference>
<dbReference type="InterPro" id="IPR015424">
    <property type="entry name" value="PyrdxlP-dep_Trfase"/>
</dbReference>
<dbReference type="InterPro" id="IPR015421">
    <property type="entry name" value="PyrdxlP-dep_Trfase_major"/>
</dbReference>
<dbReference type="InterPro" id="IPR015422">
    <property type="entry name" value="PyrdxlP-dep_Trfase_small"/>
</dbReference>
<dbReference type="NCBIfam" id="TIGR00858">
    <property type="entry name" value="bioF"/>
    <property type="match status" value="1"/>
</dbReference>
<dbReference type="PANTHER" id="PTHR13693:SF100">
    <property type="entry name" value="8-AMINO-7-OXONONANOATE SYNTHASE"/>
    <property type="match status" value="1"/>
</dbReference>
<dbReference type="PANTHER" id="PTHR13693">
    <property type="entry name" value="CLASS II AMINOTRANSFERASE/8-AMINO-7-OXONONANOATE SYNTHASE"/>
    <property type="match status" value="1"/>
</dbReference>
<dbReference type="Pfam" id="PF00155">
    <property type="entry name" value="Aminotran_1_2"/>
    <property type="match status" value="1"/>
</dbReference>
<dbReference type="SUPFAM" id="SSF53383">
    <property type="entry name" value="PLP-dependent transferases"/>
    <property type="match status" value="1"/>
</dbReference>
<dbReference type="PROSITE" id="PS00599">
    <property type="entry name" value="AA_TRANSFER_CLASS_2"/>
    <property type="match status" value="1"/>
</dbReference>